<reference key="1">
    <citation type="journal article" date="1998" name="Nature">
        <title>The complete genome of the hyperthermophilic bacterium Aquifex aeolicus.</title>
        <authorList>
            <person name="Deckert G."/>
            <person name="Warren P.V."/>
            <person name="Gaasterland T."/>
            <person name="Young W.G."/>
            <person name="Lenox A.L."/>
            <person name="Graham D.E."/>
            <person name="Overbeek R."/>
            <person name="Snead M.A."/>
            <person name="Keller M."/>
            <person name="Aujay M."/>
            <person name="Huber R."/>
            <person name="Feldman R.A."/>
            <person name="Short J.M."/>
            <person name="Olsen G.J."/>
            <person name="Swanson R.V."/>
        </authorList>
    </citation>
    <scope>NUCLEOTIDE SEQUENCE [LARGE SCALE GENOMIC DNA]</scope>
    <source>
        <strain>VF5</strain>
    </source>
</reference>
<evidence type="ECO:0000250" key="1"/>
<evidence type="ECO:0000305" key="2"/>
<gene>
    <name type="primary">hisS</name>
    <name type="ordered locus">aq_122</name>
</gene>
<proteinExistence type="inferred from homology"/>
<organism>
    <name type="scientific">Aquifex aeolicus (strain VF5)</name>
    <dbReference type="NCBI Taxonomy" id="224324"/>
    <lineage>
        <taxon>Bacteria</taxon>
        <taxon>Pseudomonadati</taxon>
        <taxon>Aquificota</taxon>
        <taxon>Aquificia</taxon>
        <taxon>Aquificales</taxon>
        <taxon>Aquificaceae</taxon>
        <taxon>Aquifex</taxon>
    </lineage>
</organism>
<dbReference type="EC" id="6.1.1.21"/>
<dbReference type="EMBL" id="AE000657">
    <property type="protein sequence ID" value="AAC06477.1"/>
    <property type="molecule type" value="Genomic_DNA"/>
</dbReference>
<dbReference type="PIR" id="G70311">
    <property type="entry name" value="G70311"/>
</dbReference>
<dbReference type="RefSeq" id="NP_213082.1">
    <property type="nucleotide sequence ID" value="NC_000918.1"/>
</dbReference>
<dbReference type="RefSeq" id="WP_010880020.1">
    <property type="nucleotide sequence ID" value="NC_000918.1"/>
</dbReference>
<dbReference type="SMR" id="O66522"/>
<dbReference type="FunCoup" id="O66522">
    <property type="interactions" value="427"/>
</dbReference>
<dbReference type="STRING" id="224324.aq_122"/>
<dbReference type="EnsemblBacteria" id="AAC06477">
    <property type="protein sequence ID" value="AAC06477"/>
    <property type="gene ID" value="aq_122"/>
</dbReference>
<dbReference type="KEGG" id="aae:aq_122"/>
<dbReference type="PATRIC" id="fig|224324.8.peg.105"/>
<dbReference type="eggNOG" id="COG0124">
    <property type="taxonomic scope" value="Bacteria"/>
</dbReference>
<dbReference type="HOGENOM" id="CLU_025113_1_1_0"/>
<dbReference type="InParanoid" id="O66522"/>
<dbReference type="OrthoDB" id="9800814at2"/>
<dbReference type="Proteomes" id="UP000000798">
    <property type="component" value="Chromosome"/>
</dbReference>
<dbReference type="GO" id="GO:0005737">
    <property type="term" value="C:cytoplasm"/>
    <property type="evidence" value="ECO:0007669"/>
    <property type="project" value="UniProtKB-SubCell"/>
</dbReference>
<dbReference type="GO" id="GO:0005524">
    <property type="term" value="F:ATP binding"/>
    <property type="evidence" value="ECO:0007669"/>
    <property type="project" value="UniProtKB-UniRule"/>
</dbReference>
<dbReference type="GO" id="GO:0004821">
    <property type="term" value="F:histidine-tRNA ligase activity"/>
    <property type="evidence" value="ECO:0000318"/>
    <property type="project" value="GO_Central"/>
</dbReference>
<dbReference type="GO" id="GO:0006427">
    <property type="term" value="P:histidyl-tRNA aminoacylation"/>
    <property type="evidence" value="ECO:0000318"/>
    <property type="project" value="GO_Central"/>
</dbReference>
<dbReference type="CDD" id="cd00773">
    <property type="entry name" value="HisRS-like_core"/>
    <property type="match status" value="1"/>
</dbReference>
<dbReference type="CDD" id="cd00859">
    <property type="entry name" value="HisRS_anticodon"/>
    <property type="match status" value="1"/>
</dbReference>
<dbReference type="FunFam" id="3.30.930.10:FF:000005">
    <property type="entry name" value="Histidine--tRNA ligase"/>
    <property type="match status" value="1"/>
</dbReference>
<dbReference type="FunFam" id="3.40.50.800:FF:000017">
    <property type="entry name" value="Histidine--tRNA ligase chloroplastic/mitochondrial"/>
    <property type="match status" value="1"/>
</dbReference>
<dbReference type="Gene3D" id="3.40.50.800">
    <property type="entry name" value="Anticodon-binding domain"/>
    <property type="match status" value="1"/>
</dbReference>
<dbReference type="Gene3D" id="3.30.930.10">
    <property type="entry name" value="Bira Bifunctional Protein, Domain 2"/>
    <property type="match status" value="1"/>
</dbReference>
<dbReference type="HAMAP" id="MF_00127">
    <property type="entry name" value="His_tRNA_synth"/>
    <property type="match status" value="1"/>
</dbReference>
<dbReference type="InterPro" id="IPR006195">
    <property type="entry name" value="aa-tRNA-synth_II"/>
</dbReference>
<dbReference type="InterPro" id="IPR045864">
    <property type="entry name" value="aa-tRNA-synth_II/BPL/LPL"/>
</dbReference>
<dbReference type="InterPro" id="IPR004154">
    <property type="entry name" value="Anticodon-bd"/>
</dbReference>
<dbReference type="InterPro" id="IPR036621">
    <property type="entry name" value="Anticodon-bd_dom_sf"/>
</dbReference>
<dbReference type="InterPro" id="IPR015807">
    <property type="entry name" value="His-tRNA-ligase"/>
</dbReference>
<dbReference type="InterPro" id="IPR041715">
    <property type="entry name" value="HisRS-like_core"/>
</dbReference>
<dbReference type="InterPro" id="IPR004516">
    <property type="entry name" value="HisRS/HisZ"/>
</dbReference>
<dbReference type="InterPro" id="IPR033656">
    <property type="entry name" value="HisRS_anticodon"/>
</dbReference>
<dbReference type="NCBIfam" id="TIGR00442">
    <property type="entry name" value="hisS"/>
    <property type="match status" value="1"/>
</dbReference>
<dbReference type="PANTHER" id="PTHR43707:SF1">
    <property type="entry name" value="HISTIDINE--TRNA LIGASE, MITOCHONDRIAL-RELATED"/>
    <property type="match status" value="1"/>
</dbReference>
<dbReference type="PANTHER" id="PTHR43707">
    <property type="entry name" value="HISTIDYL-TRNA SYNTHETASE"/>
    <property type="match status" value="1"/>
</dbReference>
<dbReference type="Pfam" id="PF03129">
    <property type="entry name" value="HGTP_anticodon"/>
    <property type="match status" value="1"/>
</dbReference>
<dbReference type="Pfam" id="PF13393">
    <property type="entry name" value="tRNA-synt_His"/>
    <property type="match status" value="1"/>
</dbReference>
<dbReference type="PIRSF" id="PIRSF001549">
    <property type="entry name" value="His-tRNA_synth"/>
    <property type="match status" value="1"/>
</dbReference>
<dbReference type="SUPFAM" id="SSF52954">
    <property type="entry name" value="Class II aaRS ABD-related"/>
    <property type="match status" value="1"/>
</dbReference>
<dbReference type="SUPFAM" id="SSF55681">
    <property type="entry name" value="Class II aaRS and biotin synthetases"/>
    <property type="match status" value="1"/>
</dbReference>
<dbReference type="PROSITE" id="PS50862">
    <property type="entry name" value="AA_TRNA_LIGASE_II"/>
    <property type="match status" value="1"/>
</dbReference>
<keyword id="KW-0030">Aminoacyl-tRNA synthetase</keyword>
<keyword id="KW-0067">ATP-binding</keyword>
<keyword id="KW-0963">Cytoplasm</keyword>
<keyword id="KW-0436">Ligase</keyword>
<keyword id="KW-0547">Nucleotide-binding</keyword>
<keyword id="KW-0648">Protein biosynthesis</keyword>
<keyword id="KW-1185">Reference proteome</keyword>
<name>SYH_AQUAE</name>
<protein>
    <recommendedName>
        <fullName>Histidine--tRNA ligase</fullName>
        <ecNumber>6.1.1.21</ecNumber>
    </recommendedName>
    <alternativeName>
        <fullName>Histidyl-tRNA synthetase</fullName>
        <shortName>HisRS</shortName>
    </alternativeName>
</protein>
<accession>O66522</accession>
<comment type="catalytic activity">
    <reaction>
        <text>tRNA(His) + L-histidine + ATP = L-histidyl-tRNA(His) + AMP + diphosphate + H(+)</text>
        <dbReference type="Rhea" id="RHEA:17313"/>
        <dbReference type="Rhea" id="RHEA-COMP:9665"/>
        <dbReference type="Rhea" id="RHEA-COMP:9689"/>
        <dbReference type="ChEBI" id="CHEBI:15378"/>
        <dbReference type="ChEBI" id="CHEBI:30616"/>
        <dbReference type="ChEBI" id="CHEBI:33019"/>
        <dbReference type="ChEBI" id="CHEBI:57595"/>
        <dbReference type="ChEBI" id="CHEBI:78442"/>
        <dbReference type="ChEBI" id="CHEBI:78527"/>
        <dbReference type="ChEBI" id="CHEBI:456215"/>
        <dbReference type="EC" id="6.1.1.21"/>
    </reaction>
</comment>
<comment type="subunit">
    <text evidence="1">Homodimer.</text>
</comment>
<comment type="subcellular location">
    <subcellularLocation>
        <location evidence="1">Cytoplasm</location>
    </subcellularLocation>
</comment>
<comment type="similarity">
    <text evidence="2">Belongs to the class-II aminoacyl-tRNA synthetase family.</text>
</comment>
<feature type="chain" id="PRO_0000136091" description="Histidine--tRNA ligase">
    <location>
        <begin position="1"/>
        <end position="403"/>
    </location>
</feature>
<sequence length="403" mass="46411">MNIQSVRGFHDILGKDAKKFRKISDTARKILKLYNFEEIILPVVEYAELFQRSVGETTDIVQKEMFVFEDRKGRKLALRPEGTAGTVRAFIQHKLYALRPYVKLFYEGPMFRYERPQAGRYRQFHQIGAEVFGVAEPHADAEIIKIVYDILQALGIKGVVVEINSLGCKKDREAYREALLNYLTGVKEELCSDCISRMDRNPLRVLDCKVETCKVAVREAPKMIDFLCDECREHYEKLKNYLKALDIPFRENYNLVRGLDYYTRTVFEAVSDELGLTLIAGGRYDYLVEELGGPPTPALGFALGVERLMLLLPDEEEKEEVYFVIPFGDVHEYALRVADILRKKGKVVEYSYRKGGLKKQLEFADKLGVKYAVIIGEDEVKNQEVTIKDMETGEQRRVKLSEL</sequence>